<keyword id="KW-0456">Lyase</keyword>
<keyword id="KW-1185">Reference proteome</keyword>
<proteinExistence type="inferred from homology"/>
<evidence type="ECO:0000255" key="1">
    <source>
        <dbReference type="HAMAP-Rule" id="MF_00434"/>
    </source>
</evidence>
<comment type="catalytic activity">
    <reaction evidence="1">
        <text>(4aS,6R)-4a-hydroxy-L-erythro-5,6,7,8-tetrahydrobiopterin = (6R)-L-erythro-6,7-dihydrobiopterin + H2O</text>
        <dbReference type="Rhea" id="RHEA:11920"/>
        <dbReference type="ChEBI" id="CHEBI:15377"/>
        <dbReference type="ChEBI" id="CHEBI:15642"/>
        <dbReference type="ChEBI" id="CHEBI:43120"/>
        <dbReference type="EC" id="4.2.1.96"/>
    </reaction>
</comment>
<comment type="similarity">
    <text evidence="1">Belongs to the pterin-4-alpha-carbinolamine dehydratase family.</text>
</comment>
<protein>
    <recommendedName>
        <fullName evidence="1">Putative pterin-4-alpha-carbinolamine dehydratase</fullName>
        <shortName evidence="1">PHS</shortName>
        <ecNumber evidence="1">4.2.1.96</ecNumber>
    </recommendedName>
    <alternativeName>
        <fullName evidence="1">4-alpha-hydroxy-tetrahydropterin dehydratase</fullName>
    </alternativeName>
    <alternativeName>
        <fullName evidence="1">Pterin carbinolamine dehydratase</fullName>
        <shortName evidence="1">PCD</shortName>
    </alternativeName>
</protein>
<dbReference type="EC" id="4.2.1.96" evidence="1"/>
<dbReference type="EMBL" id="CP000143">
    <property type="protein sequence ID" value="ABA80080.1"/>
    <property type="molecule type" value="Genomic_DNA"/>
</dbReference>
<dbReference type="RefSeq" id="WP_011338575.1">
    <property type="nucleotide sequence ID" value="NC_007493.2"/>
</dbReference>
<dbReference type="RefSeq" id="YP_353981.1">
    <property type="nucleotide sequence ID" value="NC_007493.2"/>
</dbReference>
<dbReference type="SMR" id="Q3IZF4"/>
<dbReference type="STRING" id="272943.RSP_0898"/>
<dbReference type="EnsemblBacteria" id="ABA80080">
    <property type="protein sequence ID" value="ABA80080"/>
    <property type="gene ID" value="RSP_0898"/>
</dbReference>
<dbReference type="GeneID" id="3717961"/>
<dbReference type="KEGG" id="rsp:RSP_0898"/>
<dbReference type="PATRIC" id="fig|272943.9.peg.2864"/>
<dbReference type="eggNOG" id="COG2154">
    <property type="taxonomic scope" value="Bacteria"/>
</dbReference>
<dbReference type="OrthoDB" id="9794987at2"/>
<dbReference type="PhylomeDB" id="Q3IZF4"/>
<dbReference type="Proteomes" id="UP000002703">
    <property type="component" value="Chromosome 1"/>
</dbReference>
<dbReference type="GO" id="GO:0008124">
    <property type="term" value="F:4-alpha-hydroxytetrahydrobiopterin dehydratase activity"/>
    <property type="evidence" value="ECO:0007669"/>
    <property type="project" value="UniProtKB-UniRule"/>
</dbReference>
<dbReference type="GO" id="GO:0006729">
    <property type="term" value="P:tetrahydrobiopterin biosynthetic process"/>
    <property type="evidence" value="ECO:0007669"/>
    <property type="project" value="InterPro"/>
</dbReference>
<dbReference type="CDD" id="cd00914">
    <property type="entry name" value="PCD_DCoH_subfamily_b"/>
    <property type="match status" value="1"/>
</dbReference>
<dbReference type="Gene3D" id="3.30.1360.20">
    <property type="entry name" value="Transcriptional coactivator/pterin dehydratase"/>
    <property type="match status" value="1"/>
</dbReference>
<dbReference type="HAMAP" id="MF_00434">
    <property type="entry name" value="Pterin_4_alpha"/>
    <property type="match status" value="1"/>
</dbReference>
<dbReference type="InterPro" id="IPR036428">
    <property type="entry name" value="PCD_sf"/>
</dbReference>
<dbReference type="InterPro" id="IPR001533">
    <property type="entry name" value="Pterin_deHydtase"/>
</dbReference>
<dbReference type="NCBIfam" id="NF002018">
    <property type="entry name" value="PRK00823.1-3"/>
    <property type="match status" value="1"/>
</dbReference>
<dbReference type="PANTHER" id="PTHR12599">
    <property type="entry name" value="PTERIN-4-ALPHA-CARBINOLAMINE DEHYDRATASE"/>
    <property type="match status" value="1"/>
</dbReference>
<dbReference type="PANTHER" id="PTHR12599:SF0">
    <property type="entry name" value="PTERIN-4-ALPHA-CARBINOLAMINE DEHYDRATASE"/>
    <property type="match status" value="1"/>
</dbReference>
<dbReference type="Pfam" id="PF01329">
    <property type="entry name" value="Pterin_4a"/>
    <property type="match status" value="1"/>
</dbReference>
<dbReference type="SUPFAM" id="SSF55248">
    <property type="entry name" value="PCD-like"/>
    <property type="match status" value="1"/>
</dbReference>
<reference key="1">
    <citation type="submission" date="2005-09" db="EMBL/GenBank/DDBJ databases">
        <title>Complete sequence of chromosome 1 of Rhodobacter sphaeroides 2.4.1.</title>
        <authorList>
            <person name="Copeland A."/>
            <person name="Lucas S."/>
            <person name="Lapidus A."/>
            <person name="Barry K."/>
            <person name="Detter J.C."/>
            <person name="Glavina T."/>
            <person name="Hammon N."/>
            <person name="Israni S."/>
            <person name="Pitluck S."/>
            <person name="Richardson P."/>
            <person name="Mackenzie C."/>
            <person name="Choudhary M."/>
            <person name="Larimer F."/>
            <person name="Hauser L.J."/>
            <person name="Land M."/>
            <person name="Donohue T.J."/>
            <person name="Kaplan S."/>
        </authorList>
    </citation>
    <scope>NUCLEOTIDE SEQUENCE [LARGE SCALE GENOMIC DNA]</scope>
    <source>
        <strain>ATCC 17023 / DSM 158 / JCM 6121 / CCUG 31486 / LMG 2827 / NBRC 12203 / NCIMB 8253 / ATH 2.4.1.</strain>
    </source>
</reference>
<feature type="chain" id="PRO_0000231471" description="Putative pterin-4-alpha-carbinolamine dehydratase">
    <location>
        <begin position="1"/>
        <end position="92"/>
    </location>
</feature>
<sequence length="92" mass="10087">MADALDLAPLLAAGWSHDPERGVLSKTFGFETFVAAFGFMTRVALWAEKWNHHPDWSNSYGTVEVSLTSHDAGGLTERDLKLARKIDELAAA</sequence>
<organism>
    <name type="scientific">Cereibacter sphaeroides (strain ATCC 17023 / DSM 158 / JCM 6121 / CCUG 31486 / LMG 2827 / NBRC 12203 / NCIMB 8253 / ATH 2.4.1.)</name>
    <name type="common">Rhodobacter sphaeroides</name>
    <dbReference type="NCBI Taxonomy" id="272943"/>
    <lineage>
        <taxon>Bacteria</taxon>
        <taxon>Pseudomonadati</taxon>
        <taxon>Pseudomonadota</taxon>
        <taxon>Alphaproteobacteria</taxon>
        <taxon>Rhodobacterales</taxon>
        <taxon>Paracoccaceae</taxon>
        <taxon>Cereibacter</taxon>
    </lineage>
</organism>
<gene>
    <name type="ordered locus">RHOS4_25120</name>
    <name type="ORF">RSP_0898</name>
</gene>
<name>PHS_CERS4</name>
<accession>Q3IZF4</accession>